<proteinExistence type="inferred from homology"/>
<gene>
    <name evidence="1" type="primary">astB</name>
    <name type="ordered locus">Spea_1534</name>
</gene>
<comment type="function">
    <text evidence="1">Catalyzes the hydrolysis of N(2)-succinylarginine into N(2)-succinylornithine, ammonia and CO(2).</text>
</comment>
<comment type="catalytic activity">
    <reaction evidence="1">
        <text>N(2)-succinyl-L-arginine + 2 H2O + 2 H(+) = N(2)-succinyl-L-ornithine + 2 NH4(+) + CO2</text>
        <dbReference type="Rhea" id="RHEA:19533"/>
        <dbReference type="ChEBI" id="CHEBI:15377"/>
        <dbReference type="ChEBI" id="CHEBI:15378"/>
        <dbReference type="ChEBI" id="CHEBI:16526"/>
        <dbReference type="ChEBI" id="CHEBI:28938"/>
        <dbReference type="ChEBI" id="CHEBI:58241"/>
        <dbReference type="ChEBI" id="CHEBI:58514"/>
        <dbReference type="EC" id="3.5.3.23"/>
    </reaction>
</comment>
<comment type="pathway">
    <text evidence="1">Amino-acid degradation; L-arginine degradation via AST pathway; L-glutamate and succinate from L-arginine: step 2/5.</text>
</comment>
<comment type="subunit">
    <text evidence="1">Homodimer.</text>
</comment>
<comment type="similarity">
    <text evidence="1">Belongs to the succinylarginine dihydrolase family.</text>
</comment>
<accession>A8H2S2</accession>
<sequence>MKHFEANFDGLVGPTHNYAGLSFGNVASLNNAAATSSPKDAAKQGLKKAKALADLGLVQGMLAPQERPDLHTLRRIGFSGTDAEILNKAAKEAPALLRACCSASSMWTANAATVSPSADTHDGKLHFTPANLVDKLHRSIEPTTTGNILQATFNDSRYFKHHQHLPEHTSFGDEGAANHTRLCSEYGHAGVELFVYGQEATNPSAPKPQKFPARQTLEASQAVARLHQLDDNGTVYIQQNPDVIDQGVFHNDVIAVGNQNVLFYHEQAFLNTQAKLTEIKNKFGDSALHFVEVPTSQVAIQDAVKSYLFNTQVVTLPSGEMAIIAPTNCQENPAVFAYLNELVTLDTPIKQVLYFDVKQSMQNGGGPACLRLRVAMNQDEVAAVNQHTLMNDALFTRLNQWVDKHYRDRLLVEDLADPQLVIESRTALDELTQIMKLGSVYQFQR</sequence>
<organism>
    <name type="scientific">Shewanella pealeana (strain ATCC 700345 / ANG-SQ1)</name>
    <dbReference type="NCBI Taxonomy" id="398579"/>
    <lineage>
        <taxon>Bacteria</taxon>
        <taxon>Pseudomonadati</taxon>
        <taxon>Pseudomonadota</taxon>
        <taxon>Gammaproteobacteria</taxon>
        <taxon>Alteromonadales</taxon>
        <taxon>Shewanellaceae</taxon>
        <taxon>Shewanella</taxon>
    </lineage>
</organism>
<protein>
    <recommendedName>
        <fullName evidence="1">N-succinylarginine dihydrolase</fullName>
        <ecNumber evidence="1">3.5.3.23</ecNumber>
    </recommendedName>
</protein>
<reference key="1">
    <citation type="submission" date="2007-10" db="EMBL/GenBank/DDBJ databases">
        <title>Complete sequence of Shewanella pealeana ATCC 700345.</title>
        <authorList>
            <consortium name="US DOE Joint Genome Institute"/>
            <person name="Copeland A."/>
            <person name="Lucas S."/>
            <person name="Lapidus A."/>
            <person name="Barry K."/>
            <person name="Glavina del Rio T."/>
            <person name="Dalin E."/>
            <person name="Tice H."/>
            <person name="Pitluck S."/>
            <person name="Chertkov O."/>
            <person name="Brettin T."/>
            <person name="Bruce D."/>
            <person name="Detter J.C."/>
            <person name="Han C."/>
            <person name="Schmutz J."/>
            <person name="Larimer F."/>
            <person name="Land M."/>
            <person name="Hauser L."/>
            <person name="Kyrpides N."/>
            <person name="Kim E."/>
            <person name="Zhao J.-S.Z."/>
            <person name="Manno D."/>
            <person name="Hawari J."/>
            <person name="Richardson P."/>
        </authorList>
    </citation>
    <scope>NUCLEOTIDE SEQUENCE [LARGE SCALE GENOMIC DNA]</scope>
    <source>
        <strain>ATCC 700345 / ANG-SQ1</strain>
    </source>
</reference>
<name>ASTB_SHEPA</name>
<dbReference type="EC" id="3.5.3.23" evidence="1"/>
<dbReference type="EMBL" id="CP000851">
    <property type="protein sequence ID" value="ABV86859.1"/>
    <property type="molecule type" value="Genomic_DNA"/>
</dbReference>
<dbReference type="RefSeq" id="WP_012154783.1">
    <property type="nucleotide sequence ID" value="NC_009901.1"/>
</dbReference>
<dbReference type="SMR" id="A8H2S2"/>
<dbReference type="STRING" id="398579.Spea_1534"/>
<dbReference type="KEGG" id="spl:Spea_1534"/>
<dbReference type="eggNOG" id="COG3724">
    <property type="taxonomic scope" value="Bacteria"/>
</dbReference>
<dbReference type="HOGENOM" id="CLU_053835_0_0_6"/>
<dbReference type="OrthoDB" id="248552at2"/>
<dbReference type="UniPathway" id="UPA00185">
    <property type="reaction ID" value="UER00280"/>
</dbReference>
<dbReference type="Proteomes" id="UP000002608">
    <property type="component" value="Chromosome"/>
</dbReference>
<dbReference type="GO" id="GO:0009015">
    <property type="term" value="F:N-succinylarginine dihydrolase activity"/>
    <property type="evidence" value="ECO:0007669"/>
    <property type="project" value="UniProtKB-UniRule"/>
</dbReference>
<dbReference type="GO" id="GO:0019544">
    <property type="term" value="P:arginine catabolic process to glutamate"/>
    <property type="evidence" value="ECO:0007669"/>
    <property type="project" value="UniProtKB-UniRule"/>
</dbReference>
<dbReference type="GO" id="GO:0019545">
    <property type="term" value="P:arginine catabolic process to succinate"/>
    <property type="evidence" value="ECO:0007669"/>
    <property type="project" value="UniProtKB-UniRule"/>
</dbReference>
<dbReference type="Gene3D" id="3.75.10.20">
    <property type="entry name" value="Succinylarginine dihydrolase"/>
    <property type="match status" value="1"/>
</dbReference>
<dbReference type="HAMAP" id="MF_01172">
    <property type="entry name" value="AstB"/>
    <property type="match status" value="1"/>
</dbReference>
<dbReference type="InterPro" id="IPR037031">
    <property type="entry name" value="AstB_sf"/>
</dbReference>
<dbReference type="InterPro" id="IPR007079">
    <property type="entry name" value="SuccinylArg_d-Hdrlase_AstB"/>
</dbReference>
<dbReference type="NCBIfam" id="TIGR03241">
    <property type="entry name" value="arg_catab_astB"/>
    <property type="match status" value="1"/>
</dbReference>
<dbReference type="NCBIfam" id="NF009789">
    <property type="entry name" value="PRK13281.1"/>
    <property type="match status" value="1"/>
</dbReference>
<dbReference type="PANTHER" id="PTHR30420">
    <property type="entry name" value="N-SUCCINYLARGININE DIHYDROLASE"/>
    <property type="match status" value="1"/>
</dbReference>
<dbReference type="PANTHER" id="PTHR30420:SF2">
    <property type="entry name" value="N-SUCCINYLARGININE DIHYDROLASE"/>
    <property type="match status" value="1"/>
</dbReference>
<dbReference type="Pfam" id="PF04996">
    <property type="entry name" value="AstB"/>
    <property type="match status" value="1"/>
</dbReference>
<dbReference type="SUPFAM" id="SSF55909">
    <property type="entry name" value="Pentein"/>
    <property type="match status" value="1"/>
</dbReference>
<evidence type="ECO:0000255" key="1">
    <source>
        <dbReference type="HAMAP-Rule" id="MF_01172"/>
    </source>
</evidence>
<feature type="chain" id="PRO_1000085399" description="N-succinylarginine dihydrolase">
    <location>
        <begin position="1"/>
        <end position="445"/>
    </location>
</feature>
<feature type="active site" evidence="1">
    <location>
        <position position="174"/>
    </location>
</feature>
<feature type="active site" evidence="1">
    <location>
        <position position="250"/>
    </location>
</feature>
<feature type="active site" description="Nucleophile" evidence="1">
    <location>
        <position position="369"/>
    </location>
</feature>
<feature type="binding site" evidence="1">
    <location>
        <begin position="19"/>
        <end position="28"/>
    </location>
    <ligand>
        <name>substrate</name>
    </ligand>
</feature>
<feature type="binding site" evidence="1">
    <location>
        <position position="110"/>
    </location>
    <ligand>
        <name>substrate</name>
    </ligand>
</feature>
<feature type="binding site" evidence="1">
    <location>
        <begin position="137"/>
        <end position="138"/>
    </location>
    <ligand>
        <name>substrate</name>
    </ligand>
</feature>
<feature type="binding site" evidence="1">
    <location>
        <position position="214"/>
    </location>
    <ligand>
        <name>substrate</name>
    </ligand>
</feature>
<feature type="binding site" evidence="1">
    <location>
        <position position="252"/>
    </location>
    <ligand>
        <name>substrate</name>
    </ligand>
</feature>
<feature type="binding site" evidence="1">
    <location>
        <position position="363"/>
    </location>
    <ligand>
        <name>substrate</name>
    </ligand>
</feature>
<keyword id="KW-0056">Arginine metabolism</keyword>
<keyword id="KW-0378">Hydrolase</keyword>
<keyword id="KW-1185">Reference proteome</keyword>